<reference key="1">
    <citation type="journal article" date="2006" name="Proc. Natl. Acad. Sci. U.S.A.">
        <title>The complete genome of Rhodococcus sp. RHA1 provides insights into a catabolic powerhouse.</title>
        <authorList>
            <person name="McLeod M.P."/>
            <person name="Warren R.L."/>
            <person name="Hsiao W.W.L."/>
            <person name="Araki N."/>
            <person name="Myhre M."/>
            <person name="Fernandes C."/>
            <person name="Miyazawa D."/>
            <person name="Wong W."/>
            <person name="Lillquist A.L."/>
            <person name="Wang D."/>
            <person name="Dosanjh M."/>
            <person name="Hara H."/>
            <person name="Petrescu A."/>
            <person name="Morin R.D."/>
            <person name="Yang G."/>
            <person name="Stott J.M."/>
            <person name="Schein J.E."/>
            <person name="Shin H."/>
            <person name="Smailus D."/>
            <person name="Siddiqui A.S."/>
            <person name="Marra M.A."/>
            <person name="Jones S.J.M."/>
            <person name="Holt R."/>
            <person name="Brinkman F.S.L."/>
            <person name="Miyauchi K."/>
            <person name="Fukuda M."/>
            <person name="Davies J.E."/>
            <person name="Mohn W.W."/>
            <person name="Eltis L.D."/>
        </authorList>
    </citation>
    <scope>NUCLEOTIDE SEQUENCE [LARGE SCALE GENOMIC DNA]</scope>
    <source>
        <strain>RHA1</strain>
    </source>
</reference>
<keyword id="KW-0067">ATP-binding</keyword>
<keyword id="KW-0436">Ligase</keyword>
<keyword id="KW-0460">Magnesium</keyword>
<keyword id="KW-0479">Metal-binding</keyword>
<keyword id="KW-0520">NAD</keyword>
<keyword id="KW-0547">Nucleotide-binding</keyword>
<dbReference type="EC" id="6.3.1.5" evidence="1"/>
<dbReference type="EMBL" id="CP000431">
    <property type="protein sequence ID" value="ABG98207.1"/>
    <property type="molecule type" value="Genomic_DNA"/>
</dbReference>
<dbReference type="RefSeq" id="WP_009479629.1">
    <property type="nucleotide sequence ID" value="NC_008268.1"/>
</dbReference>
<dbReference type="SMR" id="Q0S2M9"/>
<dbReference type="KEGG" id="rha:RHA1_ro06432"/>
<dbReference type="eggNOG" id="COG0171">
    <property type="taxonomic scope" value="Bacteria"/>
</dbReference>
<dbReference type="HOGENOM" id="CLU_059327_3_0_11"/>
<dbReference type="OrthoDB" id="3266517at2"/>
<dbReference type="UniPathway" id="UPA00253">
    <property type="reaction ID" value="UER00333"/>
</dbReference>
<dbReference type="Proteomes" id="UP000008710">
    <property type="component" value="Chromosome"/>
</dbReference>
<dbReference type="GO" id="GO:0005737">
    <property type="term" value="C:cytoplasm"/>
    <property type="evidence" value="ECO:0007669"/>
    <property type="project" value="InterPro"/>
</dbReference>
<dbReference type="GO" id="GO:0005524">
    <property type="term" value="F:ATP binding"/>
    <property type="evidence" value="ECO:0007669"/>
    <property type="project" value="UniProtKB-UniRule"/>
</dbReference>
<dbReference type="GO" id="GO:0004359">
    <property type="term" value="F:glutaminase activity"/>
    <property type="evidence" value="ECO:0007669"/>
    <property type="project" value="InterPro"/>
</dbReference>
<dbReference type="GO" id="GO:0046872">
    <property type="term" value="F:metal ion binding"/>
    <property type="evidence" value="ECO:0007669"/>
    <property type="project" value="UniProtKB-KW"/>
</dbReference>
<dbReference type="GO" id="GO:0003952">
    <property type="term" value="F:NAD+ synthase (glutamine-hydrolyzing) activity"/>
    <property type="evidence" value="ECO:0007669"/>
    <property type="project" value="InterPro"/>
</dbReference>
<dbReference type="GO" id="GO:0008795">
    <property type="term" value="F:NAD+ synthase activity"/>
    <property type="evidence" value="ECO:0007669"/>
    <property type="project" value="UniProtKB-UniRule"/>
</dbReference>
<dbReference type="GO" id="GO:0009435">
    <property type="term" value="P:NAD biosynthetic process"/>
    <property type="evidence" value="ECO:0007669"/>
    <property type="project" value="UniProtKB-UniRule"/>
</dbReference>
<dbReference type="CDD" id="cd00553">
    <property type="entry name" value="NAD_synthase"/>
    <property type="match status" value="1"/>
</dbReference>
<dbReference type="FunFam" id="3.40.50.620:FF:000015">
    <property type="entry name" value="NH(3)-dependent NAD(+) synthetase"/>
    <property type="match status" value="1"/>
</dbReference>
<dbReference type="Gene3D" id="3.40.50.620">
    <property type="entry name" value="HUPs"/>
    <property type="match status" value="1"/>
</dbReference>
<dbReference type="HAMAP" id="MF_00193">
    <property type="entry name" value="NadE_ammonia_dep"/>
    <property type="match status" value="1"/>
</dbReference>
<dbReference type="InterPro" id="IPR022310">
    <property type="entry name" value="NAD/GMP_synthase"/>
</dbReference>
<dbReference type="InterPro" id="IPR003694">
    <property type="entry name" value="NAD_synthase"/>
</dbReference>
<dbReference type="InterPro" id="IPR022926">
    <property type="entry name" value="NH(3)-dep_NAD(+)_synth"/>
</dbReference>
<dbReference type="InterPro" id="IPR014729">
    <property type="entry name" value="Rossmann-like_a/b/a_fold"/>
</dbReference>
<dbReference type="NCBIfam" id="TIGR00552">
    <property type="entry name" value="nadE"/>
    <property type="match status" value="1"/>
</dbReference>
<dbReference type="NCBIfam" id="NF001979">
    <property type="entry name" value="PRK00768.1"/>
    <property type="match status" value="1"/>
</dbReference>
<dbReference type="PANTHER" id="PTHR23090">
    <property type="entry name" value="NH 3 /GLUTAMINE-DEPENDENT NAD + SYNTHETASE"/>
    <property type="match status" value="1"/>
</dbReference>
<dbReference type="PANTHER" id="PTHR23090:SF7">
    <property type="entry name" value="NH(3)-DEPENDENT NAD(+) SYNTHETASE"/>
    <property type="match status" value="1"/>
</dbReference>
<dbReference type="Pfam" id="PF02540">
    <property type="entry name" value="NAD_synthase"/>
    <property type="match status" value="1"/>
</dbReference>
<dbReference type="SUPFAM" id="SSF52402">
    <property type="entry name" value="Adenine nucleotide alpha hydrolases-like"/>
    <property type="match status" value="1"/>
</dbReference>
<evidence type="ECO:0000255" key="1">
    <source>
        <dbReference type="HAMAP-Rule" id="MF_00193"/>
    </source>
</evidence>
<comment type="function">
    <text evidence="1">Catalyzes the ATP-dependent amidation of deamido-NAD to form NAD. Uses ammonia as a nitrogen source.</text>
</comment>
<comment type="catalytic activity">
    <reaction evidence="1">
        <text>deamido-NAD(+) + NH4(+) + ATP = AMP + diphosphate + NAD(+) + H(+)</text>
        <dbReference type="Rhea" id="RHEA:21188"/>
        <dbReference type="ChEBI" id="CHEBI:15378"/>
        <dbReference type="ChEBI" id="CHEBI:28938"/>
        <dbReference type="ChEBI" id="CHEBI:30616"/>
        <dbReference type="ChEBI" id="CHEBI:33019"/>
        <dbReference type="ChEBI" id="CHEBI:57540"/>
        <dbReference type="ChEBI" id="CHEBI:58437"/>
        <dbReference type="ChEBI" id="CHEBI:456215"/>
        <dbReference type="EC" id="6.3.1.5"/>
    </reaction>
</comment>
<comment type="pathway">
    <text evidence="1">Cofactor biosynthesis; NAD(+) biosynthesis; NAD(+) from deamido-NAD(+) (ammonia route): step 1/1.</text>
</comment>
<comment type="subunit">
    <text evidence="1">Homodimer.</text>
</comment>
<comment type="similarity">
    <text evidence="1">Belongs to the NAD synthetase family.</text>
</comment>
<feature type="chain" id="PRO_1000077592" description="NH(3)-dependent NAD(+) synthetase">
    <location>
        <begin position="1"/>
        <end position="279"/>
    </location>
</feature>
<feature type="binding site" evidence="1">
    <location>
        <begin position="46"/>
        <end position="53"/>
    </location>
    <ligand>
        <name>ATP</name>
        <dbReference type="ChEBI" id="CHEBI:30616"/>
    </ligand>
</feature>
<feature type="binding site" evidence="1">
    <location>
        <position position="52"/>
    </location>
    <ligand>
        <name>Mg(2+)</name>
        <dbReference type="ChEBI" id="CHEBI:18420"/>
    </ligand>
</feature>
<feature type="binding site" evidence="1">
    <location>
        <position position="145"/>
    </location>
    <ligand>
        <name>deamido-NAD(+)</name>
        <dbReference type="ChEBI" id="CHEBI:58437"/>
    </ligand>
</feature>
<feature type="binding site" evidence="1">
    <location>
        <position position="165"/>
    </location>
    <ligand>
        <name>ATP</name>
        <dbReference type="ChEBI" id="CHEBI:30616"/>
    </ligand>
</feature>
<feature type="binding site" evidence="1">
    <location>
        <position position="170"/>
    </location>
    <ligand>
        <name>Mg(2+)</name>
        <dbReference type="ChEBI" id="CHEBI:18420"/>
    </ligand>
</feature>
<feature type="binding site" evidence="1">
    <location>
        <position position="178"/>
    </location>
    <ligand>
        <name>deamido-NAD(+)</name>
        <dbReference type="ChEBI" id="CHEBI:58437"/>
    </ligand>
</feature>
<feature type="binding site" evidence="1">
    <location>
        <position position="185"/>
    </location>
    <ligand>
        <name>deamido-NAD(+)</name>
        <dbReference type="ChEBI" id="CHEBI:58437"/>
    </ligand>
</feature>
<feature type="binding site" evidence="1">
    <location>
        <position position="194"/>
    </location>
    <ligand>
        <name>ATP</name>
        <dbReference type="ChEBI" id="CHEBI:30616"/>
    </ligand>
</feature>
<feature type="binding site" evidence="1">
    <location>
        <position position="216"/>
    </location>
    <ligand>
        <name>ATP</name>
        <dbReference type="ChEBI" id="CHEBI:30616"/>
    </ligand>
</feature>
<feature type="binding site" evidence="1">
    <location>
        <begin position="265"/>
        <end position="266"/>
    </location>
    <ligand>
        <name>deamido-NAD(+)</name>
        <dbReference type="ChEBI" id="CHEBI:58437"/>
    </ligand>
</feature>
<organism>
    <name type="scientific">Rhodococcus jostii (strain RHA1)</name>
    <dbReference type="NCBI Taxonomy" id="101510"/>
    <lineage>
        <taxon>Bacteria</taxon>
        <taxon>Bacillati</taxon>
        <taxon>Actinomycetota</taxon>
        <taxon>Actinomycetes</taxon>
        <taxon>Mycobacteriales</taxon>
        <taxon>Nocardiaceae</taxon>
        <taxon>Rhodococcus</taxon>
    </lineage>
</organism>
<accession>Q0S2M9</accession>
<gene>
    <name evidence="1" type="primary">nadE</name>
    <name type="ordered locus">RHA1_ro06432</name>
</gene>
<proteinExistence type="inferred from homology"/>
<protein>
    <recommendedName>
        <fullName evidence="1">NH(3)-dependent NAD(+) synthetase</fullName>
        <ecNumber evidence="1">6.3.1.5</ecNumber>
    </recommendedName>
</protein>
<sequence>MANLRAQILEELGARPTIDAADEIRKRVQFLKDYLLSTPAKGFVLGISGGQDSTLTGRLAQLAASELRDEGHDAEFVAVRLPYGTQADESDAQISLDFIKPDRSVVVNVKPGADATAKESSEALRHIIGDGGELRDFVRGNIKARERMVIQYSIAGQLGYLVVGTDHAAEAITGFFTKFGDGGVDVTPLTGLSKRQGAALLRELGAPESTWKKVPTADLEDDRPALPDEEALGVTYAQIDDYLEGKDVPDAVAQKLETMFLNTRHKRAVPVTPLDTWWR</sequence>
<name>NADE_RHOJR</name>